<gene>
    <name evidence="1" type="primary">hslV</name>
    <name type="ordered locus">SAS1187</name>
</gene>
<accession>Q6G9W0</accession>
<proteinExistence type="inferred from homology"/>
<comment type="function">
    <text evidence="1">Protease subunit of a proteasome-like degradation complex believed to be a general protein degrading machinery.</text>
</comment>
<comment type="catalytic activity">
    <reaction evidence="1">
        <text>ATP-dependent cleavage of peptide bonds with broad specificity.</text>
        <dbReference type="EC" id="3.4.25.2"/>
    </reaction>
</comment>
<comment type="activity regulation">
    <text evidence="1">Allosterically activated by HslU binding.</text>
</comment>
<comment type="subunit">
    <text evidence="1">A double ring-shaped homohexamer of HslV is capped on each side by a ring-shaped HslU homohexamer. The assembly of the HslU/HslV complex is dependent on binding of ATP.</text>
</comment>
<comment type="subcellular location">
    <subcellularLocation>
        <location evidence="1">Cytoplasm</location>
    </subcellularLocation>
</comment>
<comment type="similarity">
    <text evidence="1">Belongs to the peptidase T1B family. HslV subfamily.</text>
</comment>
<name>HSLV_STAAS</name>
<feature type="chain" id="PRO_0000148150" description="ATP-dependent protease subunit HslV">
    <location>
        <begin position="1"/>
        <end position="181"/>
    </location>
</feature>
<feature type="active site" evidence="1">
    <location>
        <position position="9"/>
    </location>
</feature>
<feature type="binding site" evidence="1">
    <location>
        <position position="166"/>
    </location>
    <ligand>
        <name>Na(+)</name>
        <dbReference type="ChEBI" id="CHEBI:29101"/>
    </ligand>
</feature>
<feature type="binding site" evidence="1">
    <location>
        <position position="169"/>
    </location>
    <ligand>
        <name>Na(+)</name>
        <dbReference type="ChEBI" id="CHEBI:29101"/>
    </ligand>
</feature>
<feature type="binding site" evidence="1">
    <location>
        <position position="172"/>
    </location>
    <ligand>
        <name>Na(+)</name>
        <dbReference type="ChEBI" id="CHEBI:29101"/>
    </ligand>
</feature>
<reference key="1">
    <citation type="journal article" date="2004" name="Proc. Natl. Acad. Sci. U.S.A.">
        <title>Complete genomes of two clinical Staphylococcus aureus strains: evidence for the rapid evolution of virulence and drug resistance.</title>
        <authorList>
            <person name="Holden M.T.G."/>
            <person name="Feil E.J."/>
            <person name="Lindsay J.A."/>
            <person name="Peacock S.J."/>
            <person name="Day N.P.J."/>
            <person name="Enright M.C."/>
            <person name="Foster T.J."/>
            <person name="Moore C.E."/>
            <person name="Hurst L."/>
            <person name="Atkin R."/>
            <person name="Barron A."/>
            <person name="Bason N."/>
            <person name="Bentley S.D."/>
            <person name="Chillingworth C."/>
            <person name="Chillingworth T."/>
            <person name="Churcher C."/>
            <person name="Clark L."/>
            <person name="Corton C."/>
            <person name="Cronin A."/>
            <person name="Doggett J."/>
            <person name="Dowd L."/>
            <person name="Feltwell T."/>
            <person name="Hance Z."/>
            <person name="Harris B."/>
            <person name="Hauser H."/>
            <person name="Holroyd S."/>
            <person name="Jagels K."/>
            <person name="James K.D."/>
            <person name="Lennard N."/>
            <person name="Line A."/>
            <person name="Mayes R."/>
            <person name="Moule S."/>
            <person name="Mungall K."/>
            <person name="Ormond D."/>
            <person name="Quail M.A."/>
            <person name="Rabbinowitsch E."/>
            <person name="Rutherford K.M."/>
            <person name="Sanders M."/>
            <person name="Sharp S."/>
            <person name="Simmonds M."/>
            <person name="Stevens K."/>
            <person name="Whitehead S."/>
            <person name="Barrell B.G."/>
            <person name="Spratt B.G."/>
            <person name="Parkhill J."/>
        </authorList>
    </citation>
    <scope>NUCLEOTIDE SEQUENCE [LARGE SCALE GENOMIC DNA]</scope>
    <source>
        <strain>MSSA476</strain>
    </source>
</reference>
<dbReference type="EC" id="3.4.25.2" evidence="1"/>
<dbReference type="EMBL" id="BX571857">
    <property type="protein sequence ID" value="CAG42964.1"/>
    <property type="molecule type" value="Genomic_DNA"/>
</dbReference>
<dbReference type="RefSeq" id="WP_000072681.1">
    <property type="nucleotide sequence ID" value="NC_002953.3"/>
</dbReference>
<dbReference type="SMR" id="Q6G9W0"/>
<dbReference type="MEROPS" id="T01.007"/>
<dbReference type="KEGG" id="sas:SAS1187"/>
<dbReference type="HOGENOM" id="CLU_093872_1_1_9"/>
<dbReference type="GO" id="GO:0009376">
    <property type="term" value="C:HslUV protease complex"/>
    <property type="evidence" value="ECO:0007669"/>
    <property type="project" value="UniProtKB-UniRule"/>
</dbReference>
<dbReference type="GO" id="GO:0005839">
    <property type="term" value="C:proteasome core complex"/>
    <property type="evidence" value="ECO:0007669"/>
    <property type="project" value="InterPro"/>
</dbReference>
<dbReference type="GO" id="GO:0046872">
    <property type="term" value="F:metal ion binding"/>
    <property type="evidence" value="ECO:0007669"/>
    <property type="project" value="UniProtKB-KW"/>
</dbReference>
<dbReference type="GO" id="GO:0004298">
    <property type="term" value="F:threonine-type endopeptidase activity"/>
    <property type="evidence" value="ECO:0007669"/>
    <property type="project" value="UniProtKB-KW"/>
</dbReference>
<dbReference type="GO" id="GO:0051603">
    <property type="term" value="P:proteolysis involved in protein catabolic process"/>
    <property type="evidence" value="ECO:0007669"/>
    <property type="project" value="InterPro"/>
</dbReference>
<dbReference type="CDD" id="cd01913">
    <property type="entry name" value="protease_HslV"/>
    <property type="match status" value="1"/>
</dbReference>
<dbReference type="Gene3D" id="3.60.20.10">
    <property type="entry name" value="Glutamine Phosphoribosylpyrophosphate, subunit 1, domain 1"/>
    <property type="match status" value="1"/>
</dbReference>
<dbReference type="HAMAP" id="MF_00248">
    <property type="entry name" value="HslV"/>
    <property type="match status" value="1"/>
</dbReference>
<dbReference type="InterPro" id="IPR022281">
    <property type="entry name" value="ATP-dep_Prtase_HsIV_su"/>
</dbReference>
<dbReference type="InterPro" id="IPR029055">
    <property type="entry name" value="Ntn_hydrolases_N"/>
</dbReference>
<dbReference type="InterPro" id="IPR001353">
    <property type="entry name" value="Proteasome_sua/b"/>
</dbReference>
<dbReference type="InterPro" id="IPR023333">
    <property type="entry name" value="Proteasome_suB-type"/>
</dbReference>
<dbReference type="NCBIfam" id="TIGR03692">
    <property type="entry name" value="ATP_dep_HslV"/>
    <property type="match status" value="1"/>
</dbReference>
<dbReference type="NCBIfam" id="NF003964">
    <property type="entry name" value="PRK05456.1"/>
    <property type="match status" value="1"/>
</dbReference>
<dbReference type="PANTHER" id="PTHR32194:SF0">
    <property type="entry name" value="ATP-DEPENDENT PROTEASE SUBUNIT HSLV"/>
    <property type="match status" value="1"/>
</dbReference>
<dbReference type="PANTHER" id="PTHR32194">
    <property type="entry name" value="METALLOPROTEASE TLDD"/>
    <property type="match status" value="1"/>
</dbReference>
<dbReference type="Pfam" id="PF00227">
    <property type="entry name" value="Proteasome"/>
    <property type="match status" value="1"/>
</dbReference>
<dbReference type="PIRSF" id="PIRSF039093">
    <property type="entry name" value="HslV"/>
    <property type="match status" value="1"/>
</dbReference>
<dbReference type="SUPFAM" id="SSF56235">
    <property type="entry name" value="N-terminal nucleophile aminohydrolases (Ntn hydrolases)"/>
    <property type="match status" value="1"/>
</dbReference>
<dbReference type="PROSITE" id="PS51476">
    <property type="entry name" value="PROTEASOME_BETA_2"/>
    <property type="match status" value="1"/>
</dbReference>
<organism>
    <name type="scientific">Staphylococcus aureus (strain MSSA476)</name>
    <dbReference type="NCBI Taxonomy" id="282459"/>
    <lineage>
        <taxon>Bacteria</taxon>
        <taxon>Bacillati</taxon>
        <taxon>Bacillota</taxon>
        <taxon>Bacilli</taxon>
        <taxon>Bacillales</taxon>
        <taxon>Staphylococcaceae</taxon>
        <taxon>Staphylococcus</taxon>
    </lineage>
</organism>
<protein>
    <recommendedName>
        <fullName evidence="1">ATP-dependent protease subunit HslV</fullName>
        <ecNumber evidence="1">3.4.25.2</ecNumber>
    </recommendedName>
</protein>
<keyword id="KW-0021">Allosteric enzyme</keyword>
<keyword id="KW-0963">Cytoplasm</keyword>
<keyword id="KW-0378">Hydrolase</keyword>
<keyword id="KW-0479">Metal-binding</keyword>
<keyword id="KW-0645">Protease</keyword>
<keyword id="KW-0915">Sodium</keyword>
<keyword id="KW-0888">Threonine protease</keyword>
<evidence type="ECO:0000255" key="1">
    <source>
        <dbReference type="HAMAP-Rule" id="MF_00248"/>
    </source>
</evidence>
<sequence>MSNTTLHATTIYAVRHNGKAAMAGDGQVTLGQQVIMKQTARKVRRLYEGKVLAGFAGSVADAFTLFEKFETKLQQFSGNLERAAVELAQEWRGDKQLRQLEAMLIVMDKDAILVVSGTGEVIAPDDDLIAIGSGGNYALSAGRALKRHASHLSAEEMAYESLKVAADICVFTNDNIVVETL</sequence>